<feature type="chain" id="PRO_0000280083" description="Histone deacetylase 2">
    <location>
        <begin position="1"/>
        <end position="387"/>
    </location>
</feature>
<feature type="region of interest" description="Histone deacetylase">
    <location>
        <begin position="73"/>
        <end position="382"/>
    </location>
</feature>
<feature type="active site" description="Proton donor/acceptor" evidence="3">
    <location>
        <position position="201"/>
    </location>
</feature>
<feature type="binding site" evidence="3">
    <location>
        <position position="238"/>
    </location>
    <ligand>
        <name>Zn(2+)</name>
        <dbReference type="ChEBI" id="CHEBI:29105"/>
    </ligand>
</feature>
<feature type="binding site" evidence="3">
    <location>
        <position position="240"/>
    </location>
    <ligand>
        <name>Zn(2+)</name>
        <dbReference type="ChEBI" id="CHEBI:29105"/>
    </ligand>
</feature>
<feature type="binding site" evidence="3">
    <location>
        <position position="318"/>
    </location>
    <ligand>
        <name>Zn(2+)</name>
        <dbReference type="ChEBI" id="CHEBI:29105"/>
    </ligand>
</feature>
<feature type="site" description="Polarizes the scissile carbonyl of the substrate" evidence="3">
    <location>
        <position position="361"/>
    </location>
</feature>
<feature type="splice variant" id="VSP_023527" description="In isoform 3." evidence="4">
    <location>
        <begin position="208"/>
        <end position="235"/>
    </location>
</feature>
<feature type="splice variant" id="VSP_023528" description="In isoform 2." evidence="5">
    <original>NRVYILDMY</original>
    <variation>SMIKTLYIS</variation>
    <location>
        <begin position="253"/>
        <end position="261"/>
    </location>
</feature>
<feature type="splice variant" id="VSP_023529" description="In isoform 2." evidence="5">
    <location>
        <begin position="262"/>
        <end position="387"/>
    </location>
</feature>
<proteinExistence type="evidence at transcript level"/>
<organism>
    <name type="scientific">Arabidopsis thaliana</name>
    <name type="common">Mouse-ear cress</name>
    <dbReference type="NCBI Taxonomy" id="3702"/>
    <lineage>
        <taxon>Eukaryota</taxon>
        <taxon>Viridiplantae</taxon>
        <taxon>Streptophyta</taxon>
        <taxon>Embryophyta</taxon>
        <taxon>Tracheophyta</taxon>
        <taxon>Spermatophyta</taxon>
        <taxon>Magnoliopsida</taxon>
        <taxon>eudicotyledons</taxon>
        <taxon>Gunneridae</taxon>
        <taxon>Pentapetalae</taxon>
        <taxon>rosids</taxon>
        <taxon>malvids</taxon>
        <taxon>Brassicales</taxon>
        <taxon>Brassicaceae</taxon>
        <taxon>Camelineae</taxon>
        <taxon>Arabidopsis</taxon>
    </lineage>
</organism>
<evidence type="ECO:0000250" key="1"/>
<evidence type="ECO:0000250" key="2">
    <source>
        <dbReference type="UniProtKB" id="O22446"/>
    </source>
</evidence>
<evidence type="ECO:0000250" key="3">
    <source>
        <dbReference type="UniProtKB" id="Q8GXJ1"/>
    </source>
</evidence>
<evidence type="ECO:0000303" key="4">
    <source>
    </source>
</evidence>
<evidence type="ECO:0000303" key="5">
    <source>
    </source>
</evidence>
<evidence type="ECO:0000305" key="6"/>
<dbReference type="EC" id="3.5.1.98"/>
<dbReference type="EMBL" id="AF149413">
    <property type="protein sequence ID" value="AAD40129.1"/>
    <property type="status" value="ALT_SEQ"/>
    <property type="molecule type" value="Genomic_DNA"/>
</dbReference>
<dbReference type="EMBL" id="CP002688">
    <property type="protein sequence ID" value="AED93516.1"/>
    <property type="molecule type" value="Genomic_DNA"/>
</dbReference>
<dbReference type="EMBL" id="CP002688">
    <property type="protein sequence ID" value="AED93517.1"/>
    <property type="molecule type" value="Genomic_DNA"/>
</dbReference>
<dbReference type="EMBL" id="AF428336">
    <property type="protein sequence ID" value="AAL16266.1"/>
    <property type="molecule type" value="mRNA"/>
</dbReference>
<dbReference type="EMBL" id="BT002252">
    <property type="protein sequence ID" value="AAN72263.1"/>
    <property type="molecule type" value="mRNA"/>
</dbReference>
<dbReference type="EMBL" id="AF510671">
    <property type="protein sequence ID" value="AAM34784.1"/>
    <property type="molecule type" value="mRNA"/>
</dbReference>
<dbReference type="EMBL" id="AF510165">
    <property type="status" value="NOT_ANNOTATED_CDS"/>
    <property type="molecule type" value="mRNA"/>
</dbReference>
<dbReference type="RefSeq" id="NP_568480.2">
    <molecule id="Q944K3-1"/>
    <property type="nucleotide sequence ID" value="NM_122505.4"/>
</dbReference>
<dbReference type="RefSeq" id="NP_851078.1">
    <molecule id="Q944K3-3"/>
    <property type="nucleotide sequence ID" value="NM_180747.2"/>
</dbReference>
<dbReference type="SMR" id="Q944K3"/>
<dbReference type="FunCoup" id="Q944K3">
    <property type="interactions" value="678"/>
</dbReference>
<dbReference type="STRING" id="3702.Q944K3"/>
<dbReference type="PaxDb" id="3702-AT5G26040.2"/>
<dbReference type="ProteomicsDB" id="230299">
    <molecule id="Q944K3-1"/>
</dbReference>
<dbReference type="EnsemblPlants" id="AT5G26040.1">
    <molecule id="Q944K3-3"/>
    <property type="protein sequence ID" value="AT5G26040.1"/>
    <property type="gene ID" value="AT5G26040"/>
</dbReference>
<dbReference type="EnsemblPlants" id="AT5G26040.2">
    <molecule id="Q944K3-1"/>
    <property type="protein sequence ID" value="AT5G26040.2"/>
    <property type="gene ID" value="AT5G26040"/>
</dbReference>
<dbReference type="GeneID" id="832673"/>
<dbReference type="Gramene" id="AT5G26040.1">
    <molecule id="Q944K3-3"/>
    <property type="protein sequence ID" value="AT5G26040.1"/>
    <property type="gene ID" value="AT5G26040"/>
</dbReference>
<dbReference type="Gramene" id="AT5G26040.2">
    <molecule id="Q944K3-1"/>
    <property type="protein sequence ID" value="AT5G26040.2"/>
    <property type="gene ID" value="AT5G26040"/>
</dbReference>
<dbReference type="KEGG" id="ath:AT5G26040"/>
<dbReference type="Araport" id="AT5G26040"/>
<dbReference type="TAIR" id="AT5G26040">
    <property type="gene designation" value="HDA2"/>
</dbReference>
<dbReference type="eggNOG" id="KOG1344">
    <property type="taxonomic scope" value="Eukaryota"/>
</dbReference>
<dbReference type="HOGENOM" id="CLU_007727_1_1_1"/>
<dbReference type="InParanoid" id="Q944K3"/>
<dbReference type="OMA" id="EIGFPWS"/>
<dbReference type="OrthoDB" id="437693at2759"/>
<dbReference type="PhylomeDB" id="Q944K3"/>
<dbReference type="PRO" id="PR:Q944K3"/>
<dbReference type="Proteomes" id="UP000006548">
    <property type="component" value="Chromosome 5"/>
</dbReference>
<dbReference type="ExpressionAtlas" id="Q944K3">
    <property type="expression patterns" value="baseline and differential"/>
</dbReference>
<dbReference type="GO" id="GO:0005634">
    <property type="term" value="C:nucleus"/>
    <property type="evidence" value="ECO:0007669"/>
    <property type="project" value="UniProtKB-SubCell"/>
</dbReference>
<dbReference type="GO" id="GO:0141221">
    <property type="term" value="F:histone deacetylase activity, hydrolytic mechanism"/>
    <property type="evidence" value="ECO:0007669"/>
    <property type="project" value="UniProtKB-EC"/>
</dbReference>
<dbReference type="GO" id="GO:0008270">
    <property type="term" value="F:zinc ion binding"/>
    <property type="evidence" value="ECO:0000250"/>
    <property type="project" value="UniProtKB"/>
</dbReference>
<dbReference type="GO" id="GO:0006325">
    <property type="term" value="P:chromatin organization"/>
    <property type="evidence" value="ECO:0007669"/>
    <property type="project" value="UniProtKB-KW"/>
</dbReference>
<dbReference type="CDD" id="cd09993">
    <property type="entry name" value="HDAC_classIV"/>
    <property type="match status" value="1"/>
</dbReference>
<dbReference type="FunFam" id="3.40.800.20:FF:000009">
    <property type="entry name" value="Histone deacetylase 11"/>
    <property type="match status" value="1"/>
</dbReference>
<dbReference type="Gene3D" id="3.40.800.20">
    <property type="entry name" value="Histone deacetylase domain"/>
    <property type="match status" value="1"/>
</dbReference>
<dbReference type="InterPro" id="IPR044150">
    <property type="entry name" value="HDAC_classIV"/>
</dbReference>
<dbReference type="InterPro" id="IPR050284">
    <property type="entry name" value="HDAC_PDAC"/>
</dbReference>
<dbReference type="InterPro" id="IPR000286">
    <property type="entry name" value="His_deacetylse"/>
</dbReference>
<dbReference type="InterPro" id="IPR023801">
    <property type="entry name" value="His_deacetylse_dom"/>
</dbReference>
<dbReference type="InterPro" id="IPR037138">
    <property type="entry name" value="His_deacetylse_dom_sf"/>
</dbReference>
<dbReference type="InterPro" id="IPR023696">
    <property type="entry name" value="Ureohydrolase_dom_sf"/>
</dbReference>
<dbReference type="PANTHER" id="PTHR10625:SF23">
    <property type="entry name" value="HISTONE DEACETYLASE 11"/>
    <property type="match status" value="1"/>
</dbReference>
<dbReference type="PANTHER" id="PTHR10625">
    <property type="entry name" value="HISTONE DEACETYLASE HDAC1-RELATED"/>
    <property type="match status" value="1"/>
</dbReference>
<dbReference type="Pfam" id="PF00850">
    <property type="entry name" value="Hist_deacetyl"/>
    <property type="match status" value="1"/>
</dbReference>
<dbReference type="PRINTS" id="PR01270">
    <property type="entry name" value="HDASUPER"/>
</dbReference>
<dbReference type="SUPFAM" id="SSF52768">
    <property type="entry name" value="Arginase/deacetylase"/>
    <property type="match status" value="1"/>
</dbReference>
<comment type="function">
    <text evidence="2">Responsible for the deacetylation of lysine residues on the N-terminal part of the core histones (H2A, H2B, H3 and H4). Histone deacetylation gives a tag for epigenetic repression and plays an important role in transcriptional regulation, cell cycle progression and developmental events. Histone deacetylases act via the formation of large multiprotein complexes.</text>
</comment>
<comment type="catalytic activity">
    <reaction>
        <text>N(6)-acetyl-L-lysyl-[histone] + H2O = L-lysyl-[histone] + acetate</text>
        <dbReference type="Rhea" id="RHEA:58196"/>
        <dbReference type="Rhea" id="RHEA-COMP:9845"/>
        <dbReference type="Rhea" id="RHEA-COMP:11338"/>
        <dbReference type="ChEBI" id="CHEBI:15377"/>
        <dbReference type="ChEBI" id="CHEBI:29969"/>
        <dbReference type="ChEBI" id="CHEBI:30089"/>
        <dbReference type="ChEBI" id="CHEBI:61930"/>
        <dbReference type="EC" id="3.5.1.98"/>
    </reaction>
</comment>
<comment type="cofactor">
    <cofactor evidence="3">
        <name>Zn(2+)</name>
        <dbReference type="ChEBI" id="CHEBI:29105"/>
    </cofactor>
    <text evidence="3">Binds 1 zinc ion per subunit.</text>
</comment>
<comment type="subcellular location">
    <subcellularLocation>
        <location evidence="1">Nucleus</location>
    </subcellularLocation>
</comment>
<comment type="alternative products">
    <event type="alternative splicing"/>
    <isoform>
        <id>Q944K3-1</id>
        <name>1</name>
        <sequence type="displayed"/>
    </isoform>
    <isoform>
        <id>Q944K3-2</id>
        <name>2</name>
        <sequence type="described" ref="VSP_023528 VSP_023529"/>
    </isoform>
    <isoform>
        <id>Q944K3-3</id>
        <name>3</name>
        <sequence type="described" ref="VSP_023527"/>
    </isoform>
</comment>
<comment type="miscellaneous">
    <molecule>Isoform 2</molecule>
    <text evidence="6">May be due to intron retention.</text>
</comment>
<comment type="miscellaneous">
    <molecule>Isoform 3</molecule>
    <text evidence="6">May be due to a competing acceptor splice site.</text>
</comment>
<comment type="similarity">
    <text evidence="6">Belongs to the histone deacetylase family. HD type 3 subfamily.</text>
</comment>
<comment type="sequence caution" evidence="6">
    <conflict type="erroneous gene model prediction">
        <sequence resource="EMBL-CDS" id="AAD40129"/>
    </conflict>
</comment>
<name>HDA2_ARATH</name>
<sequence length="387" mass="43804">MTHTRVISTWTELTRDLAIYLLFTFFAIKVFKFLFSCNRTSEISSFSMATHPEALRRERILNSKLYFDVPLSKVSIIYSSSYDISFMGIEKLHPFDSSKWGRVCKFLVSDGFLEEKAIVEPLEASKIDLLVVHSENYLNSLKSSATVARITEVAPVAFFPNFLVQQKVLYPFRKQVGGTILAAKLATERGWAINIGGGFHHCTAERGGGFCAFADISLCIHFAFLRLRISRVMIIDLDAHQGNGHETDLGDDNRVYILDMYNPEIYPFDYRARRFIDQKVEVMSGTTTDEYLRKLDEALEVASRNFQPELVIYNAGTDILDGDPLGLLKISPDGITSRDEKVFRFAREKNIPLVMLTSGGYMKSSARVIADSIENLSRQGLIQTRPE</sequence>
<protein>
    <recommendedName>
        <fullName>Histone deacetylase 2</fullName>
        <ecNumber>3.5.1.98</ecNumber>
    </recommendedName>
</protein>
<gene>
    <name type="primary">HDA2</name>
    <name type="ordered locus">At5g26040</name>
    <name type="ORF">T1N24.9</name>
</gene>
<keyword id="KW-0025">Alternative splicing</keyword>
<keyword id="KW-0156">Chromatin regulator</keyword>
<keyword id="KW-0378">Hydrolase</keyword>
<keyword id="KW-0479">Metal-binding</keyword>
<keyword id="KW-0539">Nucleus</keyword>
<keyword id="KW-1185">Reference proteome</keyword>
<keyword id="KW-0678">Repressor</keyword>
<keyword id="KW-0804">Transcription</keyword>
<keyword id="KW-0805">Transcription regulation</keyword>
<keyword id="KW-0862">Zinc</keyword>
<reference key="1">
    <citation type="journal article" date="2000" name="Nature">
        <title>Sequence and analysis of chromosome 5 of the plant Arabidopsis thaliana.</title>
        <authorList>
            <person name="Tabata S."/>
            <person name="Kaneko T."/>
            <person name="Nakamura Y."/>
            <person name="Kotani H."/>
            <person name="Kato T."/>
            <person name="Asamizu E."/>
            <person name="Miyajima N."/>
            <person name="Sasamoto S."/>
            <person name="Kimura T."/>
            <person name="Hosouchi T."/>
            <person name="Kawashima K."/>
            <person name="Kohara M."/>
            <person name="Matsumoto M."/>
            <person name="Matsuno A."/>
            <person name="Muraki A."/>
            <person name="Nakayama S."/>
            <person name="Nakazaki N."/>
            <person name="Naruo K."/>
            <person name="Okumura S."/>
            <person name="Shinpo S."/>
            <person name="Takeuchi C."/>
            <person name="Wada T."/>
            <person name="Watanabe A."/>
            <person name="Yamada M."/>
            <person name="Yasuda M."/>
            <person name="Sato S."/>
            <person name="de la Bastide M."/>
            <person name="Huang E."/>
            <person name="Spiegel L."/>
            <person name="Gnoj L."/>
            <person name="O'Shaughnessy A."/>
            <person name="Preston R."/>
            <person name="Habermann K."/>
            <person name="Murray J."/>
            <person name="Johnson D."/>
            <person name="Rohlfing T."/>
            <person name="Nelson J."/>
            <person name="Stoneking T."/>
            <person name="Pepin K."/>
            <person name="Spieth J."/>
            <person name="Sekhon M."/>
            <person name="Armstrong J."/>
            <person name="Becker M."/>
            <person name="Belter E."/>
            <person name="Cordum H."/>
            <person name="Cordes M."/>
            <person name="Courtney L."/>
            <person name="Courtney W."/>
            <person name="Dante M."/>
            <person name="Du H."/>
            <person name="Edwards J."/>
            <person name="Fryman J."/>
            <person name="Haakensen B."/>
            <person name="Lamar E."/>
            <person name="Latreille P."/>
            <person name="Leonard S."/>
            <person name="Meyer R."/>
            <person name="Mulvaney E."/>
            <person name="Ozersky P."/>
            <person name="Riley A."/>
            <person name="Strowmatt C."/>
            <person name="Wagner-McPherson C."/>
            <person name="Wollam A."/>
            <person name="Yoakum M."/>
            <person name="Bell M."/>
            <person name="Dedhia N."/>
            <person name="Parnell L."/>
            <person name="Shah R."/>
            <person name="Rodriguez M."/>
            <person name="Hoon See L."/>
            <person name="Vil D."/>
            <person name="Baker J."/>
            <person name="Kirchoff K."/>
            <person name="Toth K."/>
            <person name="King L."/>
            <person name="Bahret A."/>
            <person name="Miller B."/>
            <person name="Marra M.A."/>
            <person name="Martienssen R."/>
            <person name="McCombie W.R."/>
            <person name="Wilson R.K."/>
            <person name="Murphy G."/>
            <person name="Bancroft I."/>
            <person name="Volckaert G."/>
            <person name="Wambutt R."/>
            <person name="Duesterhoeft A."/>
            <person name="Stiekema W."/>
            <person name="Pohl T."/>
            <person name="Entian K.-D."/>
            <person name="Terryn N."/>
            <person name="Hartley N."/>
            <person name="Bent E."/>
            <person name="Johnson S."/>
            <person name="Langham S.-A."/>
            <person name="McCullagh B."/>
            <person name="Robben J."/>
            <person name="Grymonprez B."/>
            <person name="Zimmermann W."/>
            <person name="Ramsperger U."/>
            <person name="Wedler H."/>
            <person name="Balke K."/>
            <person name="Wedler E."/>
            <person name="Peters S."/>
            <person name="van Staveren M."/>
            <person name="Dirkse W."/>
            <person name="Mooijman P."/>
            <person name="Klein Lankhorst R."/>
            <person name="Weitzenegger T."/>
            <person name="Bothe G."/>
            <person name="Rose M."/>
            <person name="Hauf J."/>
            <person name="Berneiser S."/>
            <person name="Hempel S."/>
            <person name="Feldpausch M."/>
            <person name="Lamberth S."/>
            <person name="Villarroel R."/>
            <person name="Gielen J."/>
            <person name="Ardiles W."/>
            <person name="Bents O."/>
            <person name="Lemcke K."/>
            <person name="Kolesov G."/>
            <person name="Mayer K.F.X."/>
            <person name="Rudd S."/>
            <person name="Schoof H."/>
            <person name="Schueller C."/>
            <person name="Zaccaria P."/>
            <person name="Mewes H.-W."/>
            <person name="Bevan M."/>
            <person name="Fransz P.F."/>
        </authorList>
    </citation>
    <scope>NUCLEOTIDE SEQUENCE [LARGE SCALE GENOMIC DNA]</scope>
    <source>
        <strain>cv. Columbia</strain>
    </source>
</reference>
<reference key="2">
    <citation type="journal article" date="2017" name="Plant J.">
        <title>Araport11: a complete reannotation of the Arabidopsis thaliana reference genome.</title>
        <authorList>
            <person name="Cheng C.Y."/>
            <person name="Krishnakumar V."/>
            <person name="Chan A.P."/>
            <person name="Thibaud-Nissen F."/>
            <person name="Schobel S."/>
            <person name="Town C.D."/>
        </authorList>
    </citation>
    <scope>GENOME REANNOTATION</scope>
    <source>
        <strain>cv. Columbia</strain>
    </source>
</reference>
<reference key="3">
    <citation type="journal article" date="2003" name="Science">
        <title>Empirical analysis of transcriptional activity in the Arabidopsis genome.</title>
        <authorList>
            <person name="Yamada K."/>
            <person name="Lim J."/>
            <person name="Dale J.M."/>
            <person name="Chen H."/>
            <person name="Shinn P."/>
            <person name="Palm C.J."/>
            <person name="Southwick A.M."/>
            <person name="Wu H.C."/>
            <person name="Kim C.J."/>
            <person name="Nguyen M."/>
            <person name="Pham P.K."/>
            <person name="Cheuk R.F."/>
            <person name="Karlin-Newmann G."/>
            <person name="Liu S.X."/>
            <person name="Lam B."/>
            <person name="Sakano H."/>
            <person name="Wu T."/>
            <person name="Yu G."/>
            <person name="Miranda M."/>
            <person name="Quach H.L."/>
            <person name="Tripp M."/>
            <person name="Chang C.H."/>
            <person name="Lee J.M."/>
            <person name="Toriumi M.J."/>
            <person name="Chan M.M."/>
            <person name="Tang C.C."/>
            <person name="Onodera C.S."/>
            <person name="Deng J.M."/>
            <person name="Akiyama K."/>
            <person name="Ansari Y."/>
            <person name="Arakawa T."/>
            <person name="Banh J."/>
            <person name="Banno F."/>
            <person name="Bowser L."/>
            <person name="Brooks S.Y."/>
            <person name="Carninci P."/>
            <person name="Chao Q."/>
            <person name="Choy N."/>
            <person name="Enju A."/>
            <person name="Goldsmith A.D."/>
            <person name="Gurjal M."/>
            <person name="Hansen N.F."/>
            <person name="Hayashizaki Y."/>
            <person name="Johnson-Hopson C."/>
            <person name="Hsuan V.W."/>
            <person name="Iida K."/>
            <person name="Karnes M."/>
            <person name="Khan S."/>
            <person name="Koesema E."/>
            <person name="Ishida J."/>
            <person name="Jiang P.X."/>
            <person name="Jones T."/>
            <person name="Kawai J."/>
            <person name="Kamiya A."/>
            <person name="Meyers C."/>
            <person name="Nakajima M."/>
            <person name="Narusaka M."/>
            <person name="Seki M."/>
            <person name="Sakurai T."/>
            <person name="Satou M."/>
            <person name="Tamse R."/>
            <person name="Vaysberg M."/>
            <person name="Wallender E.K."/>
            <person name="Wong C."/>
            <person name="Yamamura Y."/>
            <person name="Yuan S."/>
            <person name="Shinozaki K."/>
            <person name="Davis R.W."/>
            <person name="Theologis A."/>
            <person name="Ecker J.R."/>
        </authorList>
    </citation>
    <scope>NUCLEOTIDE SEQUENCE [LARGE SCALE MRNA] (ISOFORM 2)</scope>
    <source>
        <strain>cv. Columbia</strain>
    </source>
</reference>
<reference key="4">
    <citation type="journal article" date="2002" name="Nucleic Acids Res.">
        <title>Analysis of histone acetyltransferase and histone deacetylase families of Arabidopsis thaliana suggests functional diversification of chromatin modification among multicellular eukaryotes.</title>
        <authorList>
            <person name="Pandey R."/>
            <person name="Mueller A."/>
            <person name="Napoli C.A."/>
            <person name="Selinger D.A."/>
            <person name="Pikaard C.S."/>
            <person name="Richards E.J."/>
            <person name="Bender J."/>
            <person name="Mount D.W."/>
            <person name="Jorgensen R.A."/>
        </authorList>
    </citation>
    <scope>NUCLEOTIDE SEQUENCE [MRNA] OF 48-387 (ISOFORMS 1 AND 3)</scope>
    <scope>GENE FAMILY</scope>
    <scope>NOMENCLATURE</scope>
</reference>
<accession>Q944K3</accession>
<accession>Q3E940</accession>
<accession>Q8LRK7</accession>
<accession>Q9XH00</accession>